<proteinExistence type="inferred from homology"/>
<name>YEJM_ECOL6</name>
<feature type="chain" id="PRO_0000169167" description="Inner membrane protein YejM">
    <location>
        <begin position="1"/>
        <end position="586"/>
    </location>
</feature>
<feature type="topological domain" description="Cytoplasmic" evidence="2">
    <location>
        <begin position="1"/>
        <end position="20"/>
    </location>
</feature>
<feature type="transmembrane region" description="Helical" evidence="2">
    <location>
        <begin position="21"/>
        <end position="43"/>
    </location>
</feature>
<feature type="topological domain" description="Periplasmic" evidence="2">
    <location>
        <begin position="44"/>
        <end position="57"/>
    </location>
</feature>
<feature type="transmembrane region" description="Helical" evidence="2">
    <location>
        <begin position="58"/>
        <end position="80"/>
    </location>
</feature>
<feature type="topological domain" description="Cytoplasmic" evidence="2">
    <location>
        <begin position="81"/>
        <end position="84"/>
    </location>
</feature>
<feature type="transmembrane region" description="Helical" evidence="2">
    <location>
        <begin position="85"/>
        <end position="103"/>
    </location>
</feature>
<feature type="topological domain" description="Periplasmic" evidence="2">
    <location>
        <begin position="104"/>
        <end position="134"/>
    </location>
</feature>
<feature type="transmembrane region" description="Helical" evidence="2">
    <location>
        <begin position="135"/>
        <end position="157"/>
    </location>
</feature>
<feature type="topological domain" description="Cytoplasmic" evidence="2">
    <location>
        <begin position="158"/>
        <end position="168"/>
    </location>
</feature>
<feature type="transmembrane region" description="Helical" evidence="2">
    <location>
        <begin position="169"/>
        <end position="191"/>
    </location>
</feature>
<feature type="topological domain" description="Periplasmic" evidence="2">
    <location>
        <begin position="192"/>
        <end position="586"/>
    </location>
</feature>
<gene>
    <name type="primary">yejM</name>
    <name type="ordered locus">c2726</name>
</gene>
<comment type="subcellular location">
    <subcellularLocation>
        <location evidence="1">Cell inner membrane</location>
        <topology evidence="1">Multi-pass membrane protein</topology>
    </subcellularLocation>
</comment>
<comment type="similarity">
    <text evidence="3">To H.influenzae HI_0842.</text>
</comment>
<reference key="1">
    <citation type="journal article" date="2002" name="Proc. Natl. Acad. Sci. U.S.A.">
        <title>Extensive mosaic structure revealed by the complete genome sequence of uropathogenic Escherichia coli.</title>
        <authorList>
            <person name="Welch R.A."/>
            <person name="Burland V."/>
            <person name="Plunkett G. III"/>
            <person name="Redford P."/>
            <person name="Roesch P."/>
            <person name="Rasko D."/>
            <person name="Buckles E.L."/>
            <person name="Liou S.-R."/>
            <person name="Boutin A."/>
            <person name="Hackett J."/>
            <person name="Stroud D."/>
            <person name="Mayhew G.F."/>
            <person name="Rose D.J."/>
            <person name="Zhou S."/>
            <person name="Schwartz D.C."/>
            <person name="Perna N.T."/>
            <person name="Mobley H.L.T."/>
            <person name="Donnenberg M.S."/>
            <person name="Blattner F.R."/>
        </authorList>
    </citation>
    <scope>NUCLEOTIDE SEQUENCE [LARGE SCALE GENOMIC DNA]</scope>
    <source>
        <strain>CFT073 / ATCC 700928 / UPEC</strain>
    </source>
</reference>
<accession>P0AD28</accession>
<accession>P33922</accession>
<accession>P33923</accession>
<dbReference type="EMBL" id="AE014075">
    <property type="protein sequence ID" value="AAN81180.1"/>
    <property type="molecule type" value="Genomic_DNA"/>
</dbReference>
<dbReference type="RefSeq" id="WP_000256203.1">
    <property type="nucleotide sequence ID" value="NZ_CP051263.1"/>
</dbReference>
<dbReference type="SMR" id="P0AD28"/>
<dbReference type="STRING" id="199310.c2726"/>
<dbReference type="GeneID" id="75172317"/>
<dbReference type="KEGG" id="ecc:c2726"/>
<dbReference type="eggNOG" id="COG3083">
    <property type="taxonomic scope" value="Bacteria"/>
</dbReference>
<dbReference type="HOGENOM" id="CLU_030247_1_0_6"/>
<dbReference type="BioCyc" id="ECOL199310:C2726-MONOMER"/>
<dbReference type="Proteomes" id="UP000001410">
    <property type="component" value="Chromosome"/>
</dbReference>
<dbReference type="GO" id="GO:0005886">
    <property type="term" value="C:plasma membrane"/>
    <property type="evidence" value="ECO:0007669"/>
    <property type="project" value="UniProtKB-SubCell"/>
</dbReference>
<dbReference type="FunFam" id="3.40.720.10:FF:000014">
    <property type="entry name" value="Hydrolase, inner membrane"/>
    <property type="match status" value="1"/>
</dbReference>
<dbReference type="Gene3D" id="3.40.720.10">
    <property type="entry name" value="Alkaline Phosphatase, subunit A"/>
    <property type="match status" value="1"/>
</dbReference>
<dbReference type="InterPro" id="IPR017850">
    <property type="entry name" value="Alkaline_phosphatase_core_sf"/>
</dbReference>
<dbReference type="InterPro" id="IPR000917">
    <property type="entry name" value="Sulfatase_N"/>
</dbReference>
<dbReference type="InterPro" id="IPR012159">
    <property type="entry name" value="YejM-like"/>
</dbReference>
<dbReference type="InterPro" id="IPR047997">
    <property type="entry name" value="YejM_enterobact"/>
</dbReference>
<dbReference type="InterPro" id="IPR024588">
    <property type="entry name" value="YejM_N"/>
</dbReference>
<dbReference type="NCBIfam" id="NF038282">
    <property type="entry name" value="LapC_YejM_PbgA"/>
    <property type="match status" value="1"/>
</dbReference>
<dbReference type="PANTHER" id="PTHR43108:SF10">
    <property type="entry name" value="INNER MEMBRANE PROTEIN YEJM"/>
    <property type="match status" value="1"/>
</dbReference>
<dbReference type="PANTHER" id="PTHR43108">
    <property type="entry name" value="N-ACETYLGLUCOSAMINE-6-SULFATASE FAMILY MEMBER"/>
    <property type="match status" value="1"/>
</dbReference>
<dbReference type="Pfam" id="PF11893">
    <property type="entry name" value="DUF3413"/>
    <property type="match status" value="1"/>
</dbReference>
<dbReference type="Pfam" id="PF00884">
    <property type="entry name" value="Sulfatase"/>
    <property type="match status" value="1"/>
</dbReference>
<dbReference type="PIRSF" id="PIRSF004950">
    <property type="entry name" value="Mmb_sulf_HI0842"/>
    <property type="match status" value="1"/>
</dbReference>
<dbReference type="SUPFAM" id="SSF53649">
    <property type="entry name" value="Alkaline phosphatase-like"/>
    <property type="match status" value="1"/>
</dbReference>
<protein>
    <recommendedName>
        <fullName>Inner membrane protein YejM</fullName>
    </recommendedName>
</protein>
<organism>
    <name type="scientific">Escherichia coli O6:H1 (strain CFT073 / ATCC 700928 / UPEC)</name>
    <dbReference type="NCBI Taxonomy" id="199310"/>
    <lineage>
        <taxon>Bacteria</taxon>
        <taxon>Pseudomonadati</taxon>
        <taxon>Pseudomonadota</taxon>
        <taxon>Gammaproteobacteria</taxon>
        <taxon>Enterobacterales</taxon>
        <taxon>Enterobacteriaceae</taxon>
        <taxon>Escherichia</taxon>
    </lineage>
</organism>
<sequence length="586" mass="67296">MVTHRQRYREKVSQMVSWGHWFALFNILLSLVIGSRYLFIADWPTTLAGRIYSYVSIIGHFSFLVFATYLLILFPLTFIVGSQRLMRFLSVILATAGMTLLLIDSEVFTRFHLHLNPIVWQLVINPDENEMARDWQLMFISVPVILLLELVFATWSWQKLRSLTRRRRFARPLAAFLFIAFIASHVVYIWADANFYRPITMQRANLPLSYPMTARRFLEKHGLLDAQEYQRRLIEQGNPDAVSVQYPLSELRYRDMGTGQNVLLITVDGLNYSRFEKQMPALAGFAEQNISFTRHMSSGNTTDNGIFGLFYGISPSYMDGILSTRTPAALITALNQQGYQLGLFSSDGFTSPLYRQALLSDFSMPSVRTQSDEQTATQWINWLGRYAQEDNRWFSWVSFNGTNIDDSNQQAFARKYSRAAGNVDDQINRVLNALRDSGKLDNTVVIITAGRGIPLSEEEETFDWSHGHLQVPLVIHWPGTPAQRINALTDHTDLMTTLMQRLLHVSTPASEYSQGQDLFNPQRRHYWVTAADNDTLAITTPKKTLVLNNNGKYRTYNLRGERVKDEKPQLSLLLQVLTDEKRFIAN</sequence>
<keyword id="KW-0997">Cell inner membrane</keyword>
<keyword id="KW-1003">Cell membrane</keyword>
<keyword id="KW-0472">Membrane</keyword>
<keyword id="KW-1185">Reference proteome</keyword>
<keyword id="KW-0812">Transmembrane</keyword>
<keyword id="KW-1133">Transmembrane helix</keyword>
<evidence type="ECO:0000250" key="1"/>
<evidence type="ECO:0000255" key="2"/>
<evidence type="ECO:0000305" key="3"/>